<feature type="chain" id="PRO_1000008160" description="Thiamine-phosphate synthase">
    <location>
        <begin position="1"/>
        <end position="209"/>
    </location>
</feature>
<feature type="binding site" evidence="1">
    <location>
        <begin position="36"/>
        <end position="40"/>
    </location>
    <ligand>
        <name>4-amino-2-methyl-5-(diphosphooxymethyl)pyrimidine</name>
        <dbReference type="ChEBI" id="CHEBI:57841"/>
    </ligand>
</feature>
<feature type="binding site" evidence="1">
    <location>
        <position position="68"/>
    </location>
    <ligand>
        <name>4-amino-2-methyl-5-(diphosphooxymethyl)pyrimidine</name>
        <dbReference type="ChEBI" id="CHEBI:57841"/>
    </ligand>
</feature>
<feature type="binding site" evidence="1">
    <location>
        <position position="69"/>
    </location>
    <ligand>
        <name>Mg(2+)</name>
        <dbReference type="ChEBI" id="CHEBI:18420"/>
    </ligand>
</feature>
<feature type="binding site" evidence="1">
    <location>
        <position position="87"/>
    </location>
    <ligand>
        <name>Mg(2+)</name>
        <dbReference type="ChEBI" id="CHEBI:18420"/>
    </ligand>
</feature>
<feature type="binding site" evidence="1">
    <location>
        <position position="106"/>
    </location>
    <ligand>
        <name>4-amino-2-methyl-5-(diphosphooxymethyl)pyrimidine</name>
        <dbReference type="ChEBI" id="CHEBI:57841"/>
    </ligand>
</feature>
<feature type="binding site" evidence="1">
    <location>
        <begin position="133"/>
        <end position="135"/>
    </location>
    <ligand>
        <name>2-[(2R,5Z)-2-carboxy-4-methylthiazol-5(2H)-ylidene]ethyl phosphate</name>
        <dbReference type="ChEBI" id="CHEBI:62899"/>
    </ligand>
</feature>
<feature type="binding site" evidence="1">
    <location>
        <position position="136"/>
    </location>
    <ligand>
        <name>4-amino-2-methyl-5-(diphosphooxymethyl)pyrimidine</name>
        <dbReference type="ChEBI" id="CHEBI:57841"/>
    </ligand>
</feature>
<feature type="binding site" evidence="1">
    <location>
        <position position="163"/>
    </location>
    <ligand>
        <name>2-[(2R,5Z)-2-carboxy-4-methylthiazol-5(2H)-ylidene]ethyl phosphate</name>
        <dbReference type="ChEBI" id="CHEBI:62899"/>
    </ligand>
</feature>
<name>THIE_PSEP7</name>
<protein>
    <recommendedName>
        <fullName evidence="1">Thiamine-phosphate synthase</fullName>
        <shortName evidence="1">TP synthase</shortName>
        <shortName evidence="1">TPS</shortName>
        <ecNumber evidence="1">2.5.1.3</ecNumber>
    </recommendedName>
    <alternativeName>
        <fullName evidence="1">Thiamine-phosphate pyrophosphorylase</fullName>
        <shortName evidence="1">TMP pyrophosphorylase</shortName>
        <shortName evidence="1">TMP-PPase</shortName>
    </alternativeName>
</protein>
<proteinExistence type="inferred from homology"/>
<dbReference type="EC" id="2.5.1.3" evidence="1"/>
<dbReference type="EMBL" id="CP000744">
    <property type="protein sequence ID" value="ABR83884.1"/>
    <property type="molecule type" value="Genomic_DNA"/>
</dbReference>
<dbReference type="RefSeq" id="WP_012074442.1">
    <property type="nucleotide sequence ID" value="NC_009656.1"/>
</dbReference>
<dbReference type="SMR" id="A6V0D3"/>
<dbReference type="GeneID" id="77219477"/>
<dbReference type="KEGG" id="pap:PSPA7_1132"/>
<dbReference type="HOGENOM" id="CLU_018272_3_1_6"/>
<dbReference type="UniPathway" id="UPA00060">
    <property type="reaction ID" value="UER00141"/>
</dbReference>
<dbReference type="Proteomes" id="UP000001582">
    <property type="component" value="Chromosome"/>
</dbReference>
<dbReference type="GO" id="GO:0005737">
    <property type="term" value="C:cytoplasm"/>
    <property type="evidence" value="ECO:0007669"/>
    <property type="project" value="TreeGrafter"/>
</dbReference>
<dbReference type="GO" id="GO:0000287">
    <property type="term" value="F:magnesium ion binding"/>
    <property type="evidence" value="ECO:0007669"/>
    <property type="project" value="UniProtKB-UniRule"/>
</dbReference>
<dbReference type="GO" id="GO:0004789">
    <property type="term" value="F:thiamine-phosphate diphosphorylase activity"/>
    <property type="evidence" value="ECO:0007669"/>
    <property type="project" value="UniProtKB-UniRule"/>
</dbReference>
<dbReference type="GO" id="GO:0009228">
    <property type="term" value="P:thiamine biosynthetic process"/>
    <property type="evidence" value="ECO:0007669"/>
    <property type="project" value="UniProtKB-KW"/>
</dbReference>
<dbReference type="GO" id="GO:0009229">
    <property type="term" value="P:thiamine diphosphate biosynthetic process"/>
    <property type="evidence" value="ECO:0007669"/>
    <property type="project" value="UniProtKB-UniRule"/>
</dbReference>
<dbReference type="CDD" id="cd00564">
    <property type="entry name" value="TMP_TenI"/>
    <property type="match status" value="1"/>
</dbReference>
<dbReference type="Gene3D" id="3.20.20.70">
    <property type="entry name" value="Aldolase class I"/>
    <property type="match status" value="1"/>
</dbReference>
<dbReference type="HAMAP" id="MF_00097">
    <property type="entry name" value="TMP_synthase"/>
    <property type="match status" value="1"/>
</dbReference>
<dbReference type="InterPro" id="IPR013785">
    <property type="entry name" value="Aldolase_TIM"/>
</dbReference>
<dbReference type="InterPro" id="IPR036206">
    <property type="entry name" value="ThiamineP_synth_sf"/>
</dbReference>
<dbReference type="InterPro" id="IPR022998">
    <property type="entry name" value="ThiamineP_synth_TenI"/>
</dbReference>
<dbReference type="InterPro" id="IPR034291">
    <property type="entry name" value="TMP_synthase"/>
</dbReference>
<dbReference type="NCBIfam" id="TIGR00693">
    <property type="entry name" value="thiE"/>
    <property type="match status" value="1"/>
</dbReference>
<dbReference type="PANTHER" id="PTHR20857">
    <property type="entry name" value="THIAMINE-PHOSPHATE PYROPHOSPHORYLASE"/>
    <property type="match status" value="1"/>
</dbReference>
<dbReference type="PANTHER" id="PTHR20857:SF15">
    <property type="entry name" value="THIAMINE-PHOSPHATE SYNTHASE"/>
    <property type="match status" value="1"/>
</dbReference>
<dbReference type="Pfam" id="PF02581">
    <property type="entry name" value="TMP-TENI"/>
    <property type="match status" value="1"/>
</dbReference>
<dbReference type="SUPFAM" id="SSF51391">
    <property type="entry name" value="Thiamin phosphate synthase"/>
    <property type="match status" value="1"/>
</dbReference>
<sequence length="209" mass="22039">MKLRGLYAITDSQLLDDGRLLPYVEAALRGGARLLQYRDKSCDQARRLREAASLRELCERHGAQLIVNDDAELAARLGVGVHLGQTDGSLSAARALLGRQALVGATCHASLELAEQAVADGASYVAFGRFFNSSTKPGAPAASVELLDQARPRLHLPITAIGGISLDTAPGLIARGVDLIAVIHALFAAASAAEVERRARAFSALFETA</sequence>
<keyword id="KW-0460">Magnesium</keyword>
<keyword id="KW-0479">Metal-binding</keyword>
<keyword id="KW-0784">Thiamine biosynthesis</keyword>
<keyword id="KW-0808">Transferase</keyword>
<comment type="function">
    <text evidence="1">Condenses 4-methyl-5-(beta-hydroxyethyl)thiazole monophosphate (THZ-P) and 2-methyl-4-amino-5-hydroxymethyl pyrimidine pyrophosphate (HMP-PP) to form thiamine monophosphate (TMP).</text>
</comment>
<comment type="catalytic activity">
    <reaction evidence="1">
        <text>2-[(2R,5Z)-2-carboxy-4-methylthiazol-5(2H)-ylidene]ethyl phosphate + 4-amino-2-methyl-5-(diphosphooxymethyl)pyrimidine + 2 H(+) = thiamine phosphate + CO2 + diphosphate</text>
        <dbReference type="Rhea" id="RHEA:47844"/>
        <dbReference type="ChEBI" id="CHEBI:15378"/>
        <dbReference type="ChEBI" id="CHEBI:16526"/>
        <dbReference type="ChEBI" id="CHEBI:33019"/>
        <dbReference type="ChEBI" id="CHEBI:37575"/>
        <dbReference type="ChEBI" id="CHEBI:57841"/>
        <dbReference type="ChEBI" id="CHEBI:62899"/>
        <dbReference type="EC" id="2.5.1.3"/>
    </reaction>
</comment>
<comment type="catalytic activity">
    <reaction evidence="1">
        <text>2-(2-carboxy-4-methylthiazol-5-yl)ethyl phosphate + 4-amino-2-methyl-5-(diphosphooxymethyl)pyrimidine + 2 H(+) = thiamine phosphate + CO2 + diphosphate</text>
        <dbReference type="Rhea" id="RHEA:47848"/>
        <dbReference type="ChEBI" id="CHEBI:15378"/>
        <dbReference type="ChEBI" id="CHEBI:16526"/>
        <dbReference type="ChEBI" id="CHEBI:33019"/>
        <dbReference type="ChEBI" id="CHEBI:37575"/>
        <dbReference type="ChEBI" id="CHEBI:57841"/>
        <dbReference type="ChEBI" id="CHEBI:62890"/>
        <dbReference type="EC" id="2.5.1.3"/>
    </reaction>
</comment>
<comment type="catalytic activity">
    <reaction evidence="1">
        <text>4-methyl-5-(2-phosphooxyethyl)-thiazole + 4-amino-2-methyl-5-(diphosphooxymethyl)pyrimidine + H(+) = thiamine phosphate + diphosphate</text>
        <dbReference type="Rhea" id="RHEA:22328"/>
        <dbReference type="ChEBI" id="CHEBI:15378"/>
        <dbReference type="ChEBI" id="CHEBI:33019"/>
        <dbReference type="ChEBI" id="CHEBI:37575"/>
        <dbReference type="ChEBI" id="CHEBI:57841"/>
        <dbReference type="ChEBI" id="CHEBI:58296"/>
        <dbReference type="EC" id="2.5.1.3"/>
    </reaction>
</comment>
<comment type="cofactor">
    <cofactor evidence="1">
        <name>Mg(2+)</name>
        <dbReference type="ChEBI" id="CHEBI:18420"/>
    </cofactor>
    <text evidence="1">Binds 1 Mg(2+) ion per subunit.</text>
</comment>
<comment type="pathway">
    <text evidence="1">Cofactor biosynthesis; thiamine diphosphate biosynthesis; thiamine phosphate from 4-amino-2-methyl-5-diphosphomethylpyrimidine and 4-methyl-5-(2-phosphoethyl)-thiazole: step 1/1.</text>
</comment>
<comment type="similarity">
    <text evidence="1">Belongs to the thiamine-phosphate synthase family.</text>
</comment>
<gene>
    <name evidence="1" type="primary">thiE</name>
    <name type="ordered locus">PSPA7_1132</name>
</gene>
<accession>A6V0D3</accession>
<organism>
    <name type="scientific">Pseudomonas paraeruginosa (strain DSM 24068 / PA7)</name>
    <name type="common">Pseudomonas aeruginosa (strain PA7)</name>
    <dbReference type="NCBI Taxonomy" id="381754"/>
    <lineage>
        <taxon>Bacteria</taxon>
        <taxon>Pseudomonadati</taxon>
        <taxon>Pseudomonadota</taxon>
        <taxon>Gammaproteobacteria</taxon>
        <taxon>Pseudomonadales</taxon>
        <taxon>Pseudomonadaceae</taxon>
        <taxon>Pseudomonas</taxon>
        <taxon>Pseudomonas paraeruginosa</taxon>
    </lineage>
</organism>
<evidence type="ECO:0000255" key="1">
    <source>
        <dbReference type="HAMAP-Rule" id="MF_00097"/>
    </source>
</evidence>
<reference key="1">
    <citation type="submission" date="2007-06" db="EMBL/GenBank/DDBJ databases">
        <authorList>
            <person name="Dodson R.J."/>
            <person name="Harkins D."/>
            <person name="Paulsen I.T."/>
        </authorList>
    </citation>
    <scope>NUCLEOTIDE SEQUENCE [LARGE SCALE GENOMIC DNA]</scope>
    <source>
        <strain>DSM 24068 / PA7</strain>
    </source>
</reference>